<name>QUEC_METFK</name>
<proteinExistence type="inferred from homology"/>
<evidence type="ECO:0000255" key="1">
    <source>
        <dbReference type="HAMAP-Rule" id="MF_01633"/>
    </source>
</evidence>
<reference key="1">
    <citation type="submission" date="2006-03" db="EMBL/GenBank/DDBJ databases">
        <title>Complete sequence of Methylobacillus flagellatus KT.</title>
        <authorList>
            <consortium name="US DOE Joint Genome Institute"/>
            <person name="Copeland A."/>
            <person name="Lucas S."/>
            <person name="Lapidus A."/>
            <person name="Barry K."/>
            <person name="Detter J.C."/>
            <person name="Glavina del Rio T."/>
            <person name="Hammon N."/>
            <person name="Israni S."/>
            <person name="Dalin E."/>
            <person name="Tice H."/>
            <person name="Pitluck S."/>
            <person name="Brettin T."/>
            <person name="Bruce D."/>
            <person name="Han C."/>
            <person name="Tapia R."/>
            <person name="Saunders E."/>
            <person name="Gilna P."/>
            <person name="Schmutz J."/>
            <person name="Larimer F."/>
            <person name="Land M."/>
            <person name="Kyrpides N."/>
            <person name="Anderson I."/>
            <person name="Richardson P."/>
        </authorList>
    </citation>
    <scope>NUCLEOTIDE SEQUENCE [LARGE SCALE GENOMIC DNA]</scope>
    <source>
        <strain>ATCC 51484 / DSM 6875 / VKM B-1610 / KT</strain>
    </source>
</reference>
<gene>
    <name evidence="1" type="primary">queC</name>
    <name type="ordered locus">Mfla_2335</name>
</gene>
<sequence length="229" mass="24426">MSKKAVVLLSGGLDSATVLAIARHQGYDVYCLSLDYQQRHRAELQAADRVTKALGAVMHRTVKLDLSVFGGSALTDASIAVPEVPSEGIPVTYVPARNTIMLSLALAWAEVLEARDIFIGVNALDYSGYPDCRGEYVHAFQAMANLATKSAVEGRTIAIHAPLIDMTKADIVTQGTSLGVDYSLTVSCYQADDEGRACGVCDSCRLRRQGFVAAGLADPTRYAPTAGIR</sequence>
<accession>Q1GYT5</accession>
<dbReference type="EC" id="6.3.4.20" evidence="1"/>
<dbReference type="EMBL" id="CP000284">
    <property type="protein sequence ID" value="ABE50602.1"/>
    <property type="molecule type" value="Genomic_DNA"/>
</dbReference>
<dbReference type="RefSeq" id="WP_011480555.1">
    <property type="nucleotide sequence ID" value="NC_007947.1"/>
</dbReference>
<dbReference type="SMR" id="Q1GYT5"/>
<dbReference type="STRING" id="265072.Mfla_2335"/>
<dbReference type="KEGG" id="mfa:Mfla_2335"/>
<dbReference type="eggNOG" id="COG0603">
    <property type="taxonomic scope" value="Bacteria"/>
</dbReference>
<dbReference type="HOGENOM" id="CLU_081854_1_1_4"/>
<dbReference type="OrthoDB" id="9789567at2"/>
<dbReference type="UniPathway" id="UPA00391"/>
<dbReference type="Proteomes" id="UP000002440">
    <property type="component" value="Chromosome"/>
</dbReference>
<dbReference type="GO" id="GO:0005524">
    <property type="term" value="F:ATP binding"/>
    <property type="evidence" value="ECO:0007669"/>
    <property type="project" value="UniProtKB-UniRule"/>
</dbReference>
<dbReference type="GO" id="GO:0016879">
    <property type="term" value="F:ligase activity, forming carbon-nitrogen bonds"/>
    <property type="evidence" value="ECO:0007669"/>
    <property type="project" value="UniProtKB-UniRule"/>
</dbReference>
<dbReference type="GO" id="GO:0008270">
    <property type="term" value="F:zinc ion binding"/>
    <property type="evidence" value="ECO:0007669"/>
    <property type="project" value="UniProtKB-UniRule"/>
</dbReference>
<dbReference type="GO" id="GO:0008616">
    <property type="term" value="P:queuosine biosynthetic process"/>
    <property type="evidence" value="ECO:0007669"/>
    <property type="project" value="UniProtKB-UniRule"/>
</dbReference>
<dbReference type="CDD" id="cd01995">
    <property type="entry name" value="QueC-like"/>
    <property type="match status" value="1"/>
</dbReference>
<dbReference type="FunFam" id="3.40.50.620:FF:000131">
    <property type="entry name" value="7-cyano-7-deazaguanine synthase"/>
    <property type="match status" value="1"/>
</dbReference>
<dbReference type="Gene3D" id="3.40.50.620">
    <property type="entry name" value="HUPs"/>
    <property type="match status" value="1"/>
</dbReference>
<dbReference type="HAMAP" id="MF_01633">
    <property type="entry name" value="QueC"/>
    <property type="match status" value="1"/>
</dbReference>
<dbReference type="InterPro" id="IPR018317">
    <property type="entry name" value="QueC"/>
</dbReference>
<dbReference type="InterPro" id="IPR014729">
    <property type="entry name" value="Rossmann-like_a/b/a_fold"/>
</dbReference>
<dbReference type="NCBIfam" id="TIGR00364">
    <property type="entry name" value="7-cyano-7-deazaguanine synthase QueC"/>
    <property type="match status" value="1"/>
</dbReference>
<dbReference type="PANTHER" id="PTHR42914">
    <property type="entry name" value="7-CYANO-7-DEAZAGUANINE SYNTHASE"/>
    <property type="match status" value="1"/>
</dbReference>
<dbReference type="PANTHER" id="PTHR42914:SF1">
    <property type="entry name" value="7-CYANO-7-DEAZAGUANINE SYNTHASE"/>
    <property type="match status" value="1"/>
</dbReference>
<dbReference type="Pfam" id="PF06508">
    <property type="entry name" value="QueC"/>
    <property type="match status" value="1"/>
</dbReference>
<dbReference type="PIRSF" id="PIRSF006293">
    <property type="entry name" value="ExsB"/>
    <property type="match status" value="1"/>
</dbReference>
<dbReference type="SUPFAM" id="SSF52402">
    <property type="entry name" value="Adenine nucleotide alpha hydrolases-like"/>
    <property type="match status" value="1"/>
</dbReference>
<protein>
    <recommendedName>
        <fullName evidence="1">7-cyano-7-deazaguanine synthase</fullName>
        <ecNumber evidence="1">6.3.4.20</ecNumber>
    </recommendedName>
    <alternativeName>
        <fullName evidence="1">7-cyano-7-carbaguanine synthase</fullName>
    </alternativeName>
    <alternativeName>
        <fullName evidence="1">PreQ(0) synthase</fullName>
    </alternativeName>
    <alternativeName>
        <fullName evidence="1">Queuosine biosynthesis protein QueC</fullName>
    </alternativeName>
</protein>
<organism>
    <name type="scientific">Methylobacillus flagellatus (strain ATCC 51484 / DSM 6875 / VKM B-1610 / KT)</name>
    <dbReference type="NCBI Taxonomy" id="265072"/>
    <lineage>
        <taxon>Bacteria</taxon>
        <taxon>Pseudomonadati</taxon>
        <taxon>Pseudomonadota</taxon>
        <taxon>Betaproteobacteria</taxon>
        <taxon>Nitrosomonadales</taxon>
        <taxon>Methylophilaceae</taxon>
        <taxon>Methylobacillus</taxon>
    </lineage>
</organism>
<comment type="function">
    <text evidence="1">Catalyzes the ATP-dependent conversion of 7-carboxy-7-deazaguanine (CDG) to 7-cyano-7-deazaguanine (preQ(0)).</text>
</comment>
<comment type="catalytic activity">
    <reaction evidence="1">
        <text>7-carboxy-7-deazaguanine + NH4(+) + ATP = 7-cyano-7-deazaguanine + ADP + phosphate + H2O + H(+)</text>
        <dbReference type="Rhea" id="RHEA:27982"/>
        <dbReference type="ChEBI" id="CHEBI:15377"/>
        <dbReference type="ChEBI" id="CHEBI:15378"/>
        <dbReference type="ChEBI" id="CHEBI:28938"/>
        <dbReference type="ChEBI" id="CHEBI:30616"/>
        <dbReference type="ChEBI" id="CHEBI:43474"/>
        <dbReference type="ChEBI" id="CHEBI:45075"/>
        <dbReference type="ChEBI" id="CHEBI:61036"/>
        <dbReference type="ChEBI" id="CHEBI:456216"/>
        <dbReference type="EC" id="6.3.4.20"/>
    </reaction>
</comment>
<comment type="cofactor">
    <cofactor evidence="1">
        <name>Zn(2+)</name>
        <dbReference type="ChEBI" id="CHEBI:29105"/>
    </cofactor>
    <text evidence="1">Binds 1 zinc ion per subunit.</text>
</comment>
<comment type="pathway">
    <text evidence="1">Purine metabolism; 7-cyano-7-deazaguanine biosynthesis.</text>
</comment>
<comment type="similarity">
    <text evidence="1">Belongs to the QueC family.</text>
</comment>
<feature type="chain" id="PRO_0000255923" description="7-cyano-7-deazaguanine synthase">
    <location>
        <begin position="1"/>
        <end position="229"/>
    </location>
</feature>
<feature type="binding site" evidence="1">
    <location>
        <begin position="9"/>
        <end position="19"/>
    </location>
    <ligand>
        <name>ATP</name>
        <dbReference type="ChEBI" id="CHEBI:30616"/>
    </ligand>
</feature>
<feature type="binding site" evidence="1">
    <location>
        <position position="188"/>
    </location>
    <ligand>
        <name>Zn(2+)</name>
        <dbReference type="ChEBI" id="CHEBI:29105"/>
    </ligand>
</feature>
<feature type="binding site" evidence="1">
    <location>
        <position position="198"/>
    </location>
    <ligand>
        <name>Zn(2+)</name>
        <dbReference type="ChEBI" id="CHEBI:29105"/>
    </ligand>
</feature>
<feature type="binding site" evidence="1">
    <location>
        <position position="201"/>
    </location>
    <ligand>
        <name>Zn(2+)</name>
        <dbReference type="ChEBI" id="CHEBI:29105"/>
    </ligand>
</feature>
<feature type="binding site" evidence="1">
    <location>
        <position position="204"/>
    </location>
    <ligand>
        <name>Zn(2+)</name>
        <dbReference type="ChEBI" id="CHEBI:29105"/>
    </ligand>
</feature>
<keyword id="KW-0067">ATP-binding</keyword>
<keyword id="KW-0436">Ligase</keyword>
<keyword id="KW-0479">Metal-binding</keyword>
<keyword id="KW-0547">Nucleotide-binding</keyword>
<keyword id="KW-0671">Queuosine biosynthesis</keyword>
<keyword id="KW-1185">Reference proteome</keyword>
<keyword id="KW-0862">Zinc</keyword>